<feature type="chain" id="PRO_0000301535" description="Glutathione-regulated potassium-efflux system protein KefB">
    <location>
        <begin position="1"/>
        <end position="602"/>
    </location>
</feature>
<feature type="transmembrane region" description="Helical" evidence="1">
    <location>
        <begin position="4"/>
        <end position="24"/>
    </location>
</feature>
<feature type="transmembrane region" description="Helical" evidence="1">
    <location>
        <begin position="29"/>
        <end position="49"/>
    </location>
</feature>
<feature type="transmembrane region" description="Helical" evidence="1">
    <location>
        <begin position="55"/>
        <end position="75"/>
    </location>
</feature>
<feature type="transmembrane region" description="Helical" evidence="1">
    <location>
        <begin position="87"/>
        <end position="107"/>
    </location>
</feature>
<feature type="transmembrane region" description="Helical" evidence="1">
    <location>
        <begin position="115"/>
        <end position="135"/>
    </location>
</feature>
<feature type="transmembrane region" description="Helical" evidence="1">
    <location>
        <begin position="152"/>
        <end position="172"/>
    </location>
</feature>
<feature type="transmembrane region" description="Helical" evidence="1">
    <location>
        <begin position="181"/>
        <end position="201"/>
    </location>
</feature>
<feature type="transmembrane region" description="Helical" evidence="1">
    <location>
        <begin position="207"/>
        <end position="227"/>
    </location>
</feature>
<feature type="transmembrane region" description="Helical" evidence="1">
    <location>
        <begin position="230"/>
        <end position="250"/>
    </location>
</feature>
<feature type="transmembrane region" description="Helical" evidence="1">
    <location>
        <begin position="261"/>
        <end position="281"/>
    </location>
</feature>
<feature type="transmembrane region" description="Helical" evidence="1">
    <location>
        <begin position="296"/>
        <end position="318"/>
    </location>
</feature>
<feature type="transmembrane region" description="Helical" evidence="1">
    <location>
        <begin position="326"/>
        <end position="346"/>
    </location>
</feature>
<feature type="transmembrane region" description="Helical" evidence="1">
    <location>
        <begin position="356"/>
        <end position="376"/>
    </location>
</feature>
<feature type="domain" description="RCK N-terminal" evidence="2">
    <location>
        <begin position="400"/>
        <end position="519"/>
    </location>
</feature>
<protein>
    <recommendedName>
        <fullName evidence="1">Glutathione-regulated potassium-efflux system protein KefB</fullName>
    </recommendedName>
    <alternativeName>
        <fullName evidence="1">K(+)/H(+) antiporter</fullName>
    </alternativeName>
</protein>
<comment type="function">
    <text evidence="1">Pore-forming subunit of a potassium efflux system that confers protection against electrophiles. Catalyzes K(+)/H(+) antiport.</text>
</comment>
<comment type="subunit">
    <text evidence="1">Interacts with the regulatory subunit KefG.</text>
</comment>
<comment type="subcellular location">
    <subcellularLocation>
        <location evidence="1">Cell inner membrane</location>
        <topology evidence="1">Multi-pass membrane protein</topology>
    </subcellularLocation>
</comment>
<comment type="similarity">
    <text evidence="1">Belongs to the monovalent cation:proton antiporter 2 (CPA2) transporter (TC 2.A.37) family. KefB subfamily.</text>
</comment>
<name>KEFB_YERPA</name>
<evidence type="ECO:0000255" key="1">
    <source>
        <dbReference type="HAMAP-Rule" id="MF_01412"/>
    </source>
</evidence>
<evidence type="ECO:0000255" key="2">
    <source>
        <dbReference type="PROSITE-ProRule" id="PRU00543"/>
    </source>
</evidence>
<dbReference type="EMBL" id="CP000308">
    <property type="protein sequence ID" value="ABG15243.1"/>
    <property type="molecule type" value="Genomic_DNA"/>
</dbReference>
<dbReference type="RefSeq" id="WP_002212314.1">
    <property type="nucleotide sequence ID" value="NZ_CP009906.1"/>
</dbReference>
<dbReference type="SMR" id="Q1C2S9"/>
<dbReference type="GeneID" id="57974412"/>
<dbReference type="KEGG" id="ypa:YPA_3281"/>
<dbReference type="Proteomes" id="UP000001971">
    <property type="component" value="Chromosome"/>
</dbReference>
<dbReference type="GO" id="GO:0005886">
    <property type="term" value="C:plasma membrane"/>
    <property type="evidence" value="ECO:0007669"/>
    <property type="project" value="UniProtKB-SubCell"/>
</dbReference>
<dbReference type="GO" id="GO:0015503">
    <property type="term" value="F:glutathione-regulated potassium exporter activity"/>
    <property type="evidence" value="ECO:0007669"/>
    <property type="project" value="UniProtKB-UniRule"/>
</dbReference>
<dbReference type="GO" id="GO:1902600">
    <property type="term" value="P:proton transmembrane transport"/>
    <property type="evidence" value="ECO:0007669"/>
    <property type="project" value="InterPro"/>
</dbReference>
<dbReference type="FunFam" id="1.20.1530.20:FF:000001">
    <property type="entry name" value="Glutathione-regulated potassium-efflux system protein KefB"/>
    <property type="match status" value="1"/>
</dbReference>
<dbReference type="FunFam" id="3.40.50.720:FF:000036">
    <property type="entry name" value="Glutathione-regulated potassium-efflux system protein KefB"/>
    <property type="match status" value="1"/>
</dbReference>
<dbReference type="Gene3D" id="1.20.1530.20">
    <property type="match status" value="1"/>
</dbReference>
<dbReference type="Gene3D" id="3.40.50.720">
    <property type="entry name" value="NAD(P)-binding Rossmann-like Domain"/>
    <property type="match status" value="1"/>
</dbReference>
<dbReference type="HAMAP" id="MF_01412">
    <property type="entry name" value="K_H_efflux_KefB"/>
    <property type="match status" value="1"/>
</dbReference>
<dbReference type="InterPro" id="IPR006153">
    <property type="entry name" value="Cation/H_exchanger_TM"/>
</dbReference>
<dbReference type="InterPro" id="IPR004771">
    <property type="entry name" value="K/H_exchanger"/>
</dbReference>
<dbReference type="InterPro" id="IPR020884">
    <property type="entry name" value="K_H_efflux_KefB"/>
</dbReference>
<dbReference type="InterPro" id="IPR038770">
    <property type="entry name" value="Na+/solute_symporter_sf"/>
</dbReference>
<dbReference type="InterPro" id="IPR036291">
    <property type="entry name" value="NAD(P)-bd_dom_sf"/>
</dbReference>
<dbReference type="InterPro" id="IPR003148">
    <property type="entry name" value="RCK_N"/>
</dbReference>
<dbReference type="NCBIfam" id="TIGR00932">
    <property type="entry name" value="2a37"/>
    <property type="match status" value="1"/>
</dbReference>
<dbReference type="NCBIfam" id="NF002973">
    <property type="entry name" value="PRK03659.1"/>
    <property type="match status" value="1"/>
</dbReference>
<dbReference type="PANTHER" id="PTHR46157">
    <property type="entry name" value="K(+) EFFLUX ANTIPORTER 3, CHLOROPLASTIC"/>
    <property type="match status" value="1"/>
</dbReference>
<dbReference type="PANTHER" id="PTHR46157:SF4">
    <property type="entry name" value="K(+) EFFLUX ANTIPORTER 3, CHLOROPLASTIC"/>
    <property type="match status" value="1"/>
</dbReference>
<dbReference type="Pfam" id="PF00999">
    <property type="entry name" value="Na_H_Exchanger"/>
    <property type="match status" value="1"/>
</dbReference>
<dbReference type="Pfam" id="PF02254">
    <property type="entry name" value="TrkA_N"/>
    <property type="match status" value="1"/>
</dbReference>
<dbReference type="SUPFAM" id="SSF51735">
    <property type="entry name" value="NAD(P)-binding Rossmann-fold domains"/>
    <property type="match status" value="1"/>
</dbReference>
<dbReference type="PROSITE" id="PS51201">
    <property type="entry name" value="RCK_N"/>
    <property type="match status" value="1"/>
</dbReference>
<accession>Q1C2S9</accession>
<proteinExistence type="inferred from homology"/>
<keyword id="KW-0050">Antiport</keyword>
<keyword id="KW-0997">Cell inner membrane</keyword>
<keyword id="KW-1003">Cell membrane</keyword>
<keyword id="KW-0406">Ion transport</keyword>
<keyword id="KW-0472">Membrane</keyword>
<keyword id="KW-0630">Potassium</keyword>
<keyword id="KW-0633">Potassium transport</keyword>
<keyword id="KW-0812">Transmembrane</keyword>
<keyword id="KW-1133">Transmembrane helix</keyword>
<keyword id="KW-0813">Transport</keyword>
<gene>
    <name evidence="1" type="primary">kefB</name>
    <name type="ordered locus">YPA_3281</name>
</gene>
<sequence length="602" mass="66328">MEGTGLLTAVLVFLFAAVVAVPIAQRLGIGAVLGYLIAGIAIGPWGLGFIRDVDEILHFSELGVVFLMFIIGLELNPAKLWQLRRSIFGVGAGQVVITAAVLGALLYFTQFAWQAAVIGGVGLAMSSTAMALQLMREKGMNRNEGGQLGFSVLLFQDMAVIPALALIPILAGNEGGANDWVKIGLKIAAFAGMLIGGRYLLRPLFRYIVASGVREVFTAAALLVVLGSALFMDALGLSMALGTFIAGILLAESEFQHELEIAIEPFKGLLLGLFFISVGMALDLGVLFTHLLDVLLGVLALVFIKSAILYGLARVFGLRRSVRLQFAGVLSQGGEFAFVLFSAAFSQRVLNAEQLALLLVVVTLSMMTTPLLMQVIDRILVRRYNAQEESDEKPFVEDNDPQVIIVGFGRFGQVIGRLLMANKMRITVLERDVSAVSMMRKYGYKVYYGDATELELLRAAGAEKAKAIVITCNEPEDTMALVHLCQQHFPNLHILARARGRVEAHELLQNGVKDFTRETFSSALELGRKTLLELGMHPHQAYRAQQHFRRLDMRMLRELMPQHHGDVAQISRIKEARRELEDIFQREMLHESRQLDGWDEYE</sequence>
<organism>
    <name type="scientific">Yersinia pestis bv. Antiqua (strain Antiqua)</name>
    <dbReference type="NCBI Taxonomy" id="360102"/>
    <lineage>
        <taxon>Bacteria</taxon>
        <taxon>Pseudomonadati</taxon>
        <taxon>Pseudomonadota</taxon>
        <taxon>Gammaproteobacteria</taxon>
        <taxon>Enterobacterales</taxon>
        <taxon>Yersiniaceae</taxon>
        <taxon>Yersinia</taxon>
    </lineage>
</organism>
<reference key="1">
    <citation type="journal article" date="2006" name="J. Bacteriol.">
        <title>Complete genome sequence of Yersinia pestis strains Antiqua and Nepal516: evidence of gene reduction in an emerging pathogen.</title>
        <authorList>
            <person name="Chain P.S.G."/>
            <person name="Hu P."/>
            <person name="Malfatti S.A."/>
            <person name="Radnedge L."/>
            <person name="Larimer F."/>
            <person name="Vergez L.M."/>
            <person name="Worsham P."/>
            <person name="Chu M.C."/>
            <person name="Andersen G.L."/>
        </authorList>
    </citation>
    <scope>NUCLEOTIDE SEQUENCE [LARGE SCALE GENOMIC DNA]</scope>
    <source>
        <strain>Antiqua</strain>
    </source>
</reference>